<sequence length="215" mass="23156">MELFLDTANVDEIREAAALGVISGVTTNPSLIAREGRDFTQVVREITGLVDGPVSAEVISTEAEAMVAEAEELSQIHPNVVIKIPMILEGLKAVSMLEPRGIRTNVTLVFSANQALLAALAGASFVSPFVGRLDDAGHDGMEVVRDTVDIFDLYELPTRVIAASIRHPLHVLAAAKAGAHIATVPYQVLMQMAGHPLTDVGLRKFLDDWARLKKR</sequence>
<comment type="function">
    <text evidence="1">Transaldolase is important for the balance of metabolites in the pentose-phosphate pathway.</text>
</comment>
<comment type="catalytic activity">
    <reaction evidence="1">
        <text>D-sedoheptulose 7-phosphate + D-glyceraldehyde 3-phosphate = D-erythrose 4-phosphate + beta-D-fructose 6-phosphate</text>
        <dbReference type="Rhea" id="RHEA:17053"/>
        <dbReference type="ChEBI" id="CHEBI:16897"/>
        <dbReference type="ChEBI" id="CHEBI:57483"/>
        <dbReference type="ChEBI" id="CHEBI:57634"/>
        <dbReference type="ChEBI" id="CHEBI:59776"/>
        <dbReference type="EC" id="2.2.1.2"/>
    </reaction>
</comment>
<comment type="pathway">
    <text evidence="1">Carbohydrate degradation; pentose phosphate pathway; D-glyceraldehyde 3-phosphate and beta-D-fructose 6-phosphate from D-ribose 5-phosphate and D-xylulose 5-phosphate (non-oxidative stage): step 2/3.</text>
</comment>
<comment type="subcellular location">
    <subcellularLocation>
        <location evidence="1">Cytoplasm</location>
    </subcellularLocation>
</comment>
<comment type="similarity">
    <text evidence="1">Belongs to the transaldolase family. Type 3B subfamily.</text>
</comment>
<accession>B1I6H9</accession>
<dbReference type="EC" id="2.2.1.2" evidence="1"/>
<dbReference type="EMBL" id="CP000860">
    <property type="protein sequence ID" value="ACA60661.1"/>
    <property type="molecule type" value="Genomic_DNA"/>
</dbReference>
<dbReference type="RefSeq" id="WP_012303236.1">
    <property type="nucleotide sequence ID" value="NC_010424.1"/>
</dbReference>
<dbReference type="SMR" id="B1I6H9"/>
<dbReference type="STRING" id="477974.Daud_2174"/>
<dbReference type="KEGG" id="dau:Daud_2174"/>
<dbReference type="eggNOG" id="COG0176">
    <property type="taxonomic scope" value="Bacteria"/>
</dbReference>
<dbReference type="HOGENOM" id="CLU_079764_0_0_9"/>
<dbReference type="OrthoDB" id="9807051at2"/>
<dbReference type="UniPathway" id="UPA00115">
    <property type="reaction ID" value="UER00414"/>
</dbReference>
<dbReference type="Proteomes" id="UP000008544">
    <property type="component" value="Chromosome"/>
</dbReference>
<dbReference type="GO" id="GO:0005737">
    <property type="term" value="C:cytoplasm"/>
    <property type="evidence" value="ECO:0007669"/>
    <property type="project" value="UniProtKB-SubCell"/>
</dbReference>
<dbReference type="GO" id="GO:0016832">
    <property type="term" value="F:aldehyde-lyase activity"/>
    <property type="evidence" value="ECO:0007669"/>
    <property type="project" value="InterPro"/>
</dbReference>
<dbReference type="GO" id="GO:0004801">
    <property type="term" value="F:transaldolase activity"/>
    <property type="evidence" value="ECO:0007669"/>
    <property type="project" value="UniProtKB-UniRule"/>
</dbReference>
<dbReference type="GO" id="GO:0005975">
    <property type="term" value="P:carbohydrate metabolic process"/>
    <property type="evidence" value="ECO:0007669"/>
    <property type="project" value="InterPro"/>
</dbReference>
<dbReference type="GO" id="GO:0006098">
    <property type="term" value="P:pentose-phosphate shunt"/>
    <property type="evidence" value="ECO:0007669"/>
    <property type="project" value="UniProtKB-UniRule"/>
</dbReference>
<dbReference type="CDD" id="cd00956">
    <property type="entry name" value="Transaldolase_FSA"/>
    <property type="match status" value="1"/>
</dbReference>
<dbReference type="FunFam" id="3.20.20.70:FF:000018">
    <property type="entry name" value="Probable transaldolase"/>
    <property type="match status" value="1"/>
</dbReference>
<dbReference type="Gene3D" id="3.20.20.70">
    <property type="entry name" value="Aldolase class I"/>
    <property type="match status" value="1"/>
</dbReference>
<dbReference type="HAMAP" id="MF_00494">
    <property type="entry name" value="Transaldolase_3b"/>
    <property type="match status" value="1"/>
</dbReference>
<dbReference type="InterPro" id="IPR013785">
    <property type="entry name" value="Aldolase_TIM"/>
</dbReference>
<dbReference type="InterPro" id="IPR001585">
    <property type="entry name" value="TAL/FSA"/>
</dbReference>
<dbReference type="InterPro" id="IPR022999">
    <property type="entry name" value="Transaldolase_3B"/>
</dbReference>
<dbReference type="InterPro" id="IPR004731">
    <property type="entry name" value="Transaldolase_3B/F6P_aldolase"/>
</dbReference>
<dbReference type="InterPro" id="IPR018225">
    <property type="entry name" value="Transaldolase_AS"/>
</dbReference>
<dbReference type="InterPro" id="IPR033919">
    <property type="entry name" value="TSA/FSA_arc/bac"/>
</dbReference>
<dbReference type="NCBIfam" id="TIGR00875">
    <property type="entry name" value="fsa_talC_mipB"/>
    <property type="match status" value="1"/>
</dbReference>
<dbReference type="PANTHER" id="PTHR10683">
    <property type="entry name" value="TRANSALDOLASE"/>
    <property type="match status" value="1"/>
</dbReference>
<dbReference type="PANTHER" id="PTHR10683:SF36">
    <property type="entry name" value="TRANSALDOLASE"/>
    <property type="match status" value="1"/>
</dbReference>
<dbReference type="Pfam" id="PF00923">
    <property type="entry name" value="TAL_FSA"/>
    <property type="match status" value="1"/>
</dbReference>
<dbReference type="SUPFAM" id="SSF51569">
    <property type="entry name" value="Aldolase"/>
    <property type="match status" value="1"/>
</dbReference>
<dbReference type="PROSITE" id="PS01054">
    <property type="entry name" value="TRANSALDOLASE_1"/>
    <property type="match status" value="1"/>
</dbReference>
<feature type="chain" id="PRO_1000126307" description="Probable transaldolase">
    <location>
        <begin position="1"/>
        <end position="215"/>
    </location>
</feature>
<feature type="active site" description="Schiff-base intermediate with substrate" evidence="1">
    <location>
        <position position="83"/>
    </location>
</feature>
<reference key="1">
    <citation type="submission" date="2007-10" db="EMBL/GenBank/DDBJ databases">
        <title>Complete sequence of chromosome of Desulforudis audaxviator MP104C.</title>
        <authorList>
            <person name="Copeland A."/>
            <person name="Lucas S."/>
            <person name="Lapidus A."/>
            <person name="Barry K."/>
            <person name="Glavina del Rio T."/>
            <person name="Dalin E."/>
            <person name="Tice H."/>
            <person name="Bruce D."/>
            <person name="Pitluck S."/>
            <person name="Lowry S.R."/>
            <person name="Larimer F."/>
            <person name="Land M.L."/>
            <person name="Hauser L."/>
            <person name="Kyrpides N."/>
            <person name="Ivanova N.N."/>
            <person name="Richardson P."/>
        </authorList>
    </citation>
    <scope>NUCLEOTIDE SEQUENCE [LARGE SCALE GENOMIC DNA]</scope>
    <source>
        <strain>MP104C</strain>
    </source>
</reference>
<name>TAL_DESAP</name>
<evidence type="ECO:0000255" key="1">
    <source>
        <dbReference type="HAMAP-Rule" id="MF_00494"/>
    </source>
</evidence>
<gene>
    <name evidence="1" type="primary">tal</name>
    <name type="ordered locus">Daud_2174</name>
</gene>
<protein>
    <recommendedName>
        <fullName evidence="1">Probable transaldolase</fullName>
        <ecNumber evidence="1">2.2.1.2</ecNumber>
    </recommendedName>
</protein>
<keyword id="KW-0963">Cytoplasm</keyword>
<keyword id="KW-0570">Pentose shunt</keyword>
<keyword id="KW-1185">Reference proteome</keyword>
<keyword id="KW-0704">Schiff base</keyword>
<keyword id="KW-0808">Transferase</keyword>
<proteinExistence type="inferred from homology"/>
<organism>
    <name type="scientific">Desulforudis audaxviator (strain MP104C)</name>
    <dbReference type="NCBI Taxonomy" id="477974"/>
    <lineage>
        <taxon>Bacteria</taxon>
        <taxon>Bacillati</taxon>
        <taxon>Bacillota</taxon>
        <taxon>Clostridia</taxon>
        <taxon>Thermoanaerobacterales</taxon>
        <taxon>Candidatus Desulforudaceae</taxon>
        <taxon>Candidatus Desulforudis</taxon>
    </lineage>
</organism>